<sequence>MFRWGIIFLVIALIAAALGFGGLAGTAAGAAKIVFVVGIVLFLVSLFMGRKRP</sequence>
<comment type="subcellular location">
    <subcellularLocation>
        <location evidence="1">Cell membrane</location>
        <topology evidence="1">Multi-pass membrane protein</topology>
    </subcellularLocation>
</comment>
<comment type="similarity">
    <text evidence="1">Belongs to the UPF0391 family.</text>
</comment>
<comment type="sequence caution" evidence="2">
    <conflict type="erroneous initiation">
        <sequence resource="EMBL-CDS" id="AAL23377"/>
    </conflict>
</comment>
<protein>
    <recommendedName>
        <fullName evidence="1">UPF0391 membrane protein YtjA</fullName>
    </recommendedName>
</protein>
<dbReference type="EMBL" id="AE006468">
    <property type="protein sequence ID" value="AAL23377.1"/>
    <property type="status" value="ALT_INIT"/>
    <property type="molecule type" value="Genomic_DNA"/>
</dbReference>
<dbReference type="RefSeq" id="NP_463418.1">
    <property type="nucleotide sequence ID" value="NC_003197.2"/>
</dbReference>
<dbReference type="STRING" id="99287.STM4562"/>
<dbReference type="PaxDb" id="99287-STM4562"/>
<dbReference type="GeneID" id="1256088"/>
<dbReference type="KEGG" id="stm:STM4562"/>
<dbReference type="PATRIC" id="fig|99287.12.peg.4804"/>
<dbReference type="HOGENOM" id="CLU_187346_2_0_6"/>
<dbReference type="Proteomes" id="UP000001014">
    <property type="component" value="Chromosome"/>
</dbReference>
<dbReference type="GO" id="GO:0005886">
    <property type="term" value="C:plasma membrane"/>
    <property type="evidence" value="ECO:0007669"/>
    <property type="project" value="UniProtKB-SubCell"/>
</dbReference>
<dbReference type="HAMAP" id="MF_01361">
    <property type="entry name" value="UPF0391"/>
    <property type="match status" value="1"/>
</dbReference>
<dbReference type="InterPro" id="IPR009760">
    <property type="entry name" value="DUF1328"/>
</dbReference>
<dbReference type="NCBIfam" id="NF010229">
    <property type="entry name" value="PRK13682.1-4"/>
    <property type="match status" value="1"/>
</dbReference>
<dbReference type="NCBIfam" id="NF010230">
    <property type="entry name" value="PRK13682.1-5"/>
    <property type="match status" value="1"/>
</dbReference>
<dbReference type="Pfam" id="PF07043">
    <property type="entry name" value="DUF1328"/>
    <property type="match status" value="1"/>
</dbReference>
<dbReference type="PIRSF" id="PIRSF036466">
    <property type="entry name" value="UCP036466"/>
    <property type="match status" value="1"/>
</dbReference>
<name>YTJA_SALTY</name>
<organism>
    <name type="scientific">Salmonella typhimurium (strain LT2 / SGSC1412 / ATCC 700720)</name>
    <dbReference type="NCBI Taxonomy" id="99287"/>
    <lineage>
        <taxon>Bacteria</taxon>
        <taxon>Pseudomonadati</taxon>
        <taxon>Pseudomonadota</taxon>
        <taxon>Gammaproteobacteria</taxon>
        <taxon>Enterobacterales</taxon>
        <taxon>Enterobacteriaceae</taxon>
        <taxon>Salmonella</taxon>
    </lineage>
</organism>
<evidence type="ECO:0000255" key="1">
    <source>
        <dbReference type="HAMAP-Rule" id="MF_01361"/>
    </source>
</evidence>
<evidence type="ECO:0000305" key="2"/>
<keyword id="KW-1003">Cell membrane</keyword>
<keyword id="KW-0472">Membrane</keyword>
<keyword id="KW-1185">Reference proteome</keyword>
<keyword id="KW-0812">Transmembrane</keyword>
<keyword id="KW-1133">Transmembrane helix</keyword>
<proteinExistence type="inferred from homology"/>
<gene>
    <name evidence="1" type="primary">ytjA</name>
    <name type="ordered locus">STM4562</name>
</gene>
<reference key="1">
    <citation type="journal article" date="2001" name="Nature">
        <title>Complete genome sequence of Salmonella enterica serovar Typhimurium LT2.</title>
        <authorList>
            <person name="McClelland M."/>
            <person name="Sanderson K.E."/>
            <person name="Spieth J."/>
            <person name="Clifton S.W."/>
            <person name="Latreille P."/>
            <person name="Courtney L."/>
            <person name="Porwollik S."/>
            <person name="Ali J."/>
            <person name="Dante M."/>
            <person name="Du F."/>
            <person name="Hou S."/>
            <person name="Layman D."/>
            <person name="Leonard S."/>
            <person name="Nguyen C."/>
            <person name="Scott K."/>
            <person name="Holmes A."/>
            <person name="Grewal N."/>
            <person name="Mulvaney E."/>
            <person name="Ryan E."/>
            <person name="Sun H."/>
            <person name="Florea L."/>
            <person name="Miller W."/>
            <person name="Stoneking T."/>
            <person name="Nhan M."/>
            <person name="Waterston R."/>
            <person name="Wilson R.K."/>
        </authorList>
    </citation>
    <scope>NUCLEOTIDE SEQUENCE [LARGE SCALE GENOMIC DNA]</scope>
    <source>
        <strain>LT2 / SGSC1412 / ATCC 700720</strain>
    </source>
</reference>
<accession>Q7CP67</accession>
<feature type="chain" id="PRO_0000256787" description="UPF0391 membrane protein YtjA">
    <location>
        <begin position="1"/>
        <end position="53"/>
    </location>
</feature>
<feature type="transmembrane region" description="Helical" evidence="1">
    <location>
        <begin position="4"/>
        <end position="24"/>
    </location>
</feature>
<feature type="transmembrane region" description="Helical" evidence="1">
    <location>
        <begin position="30"/>
        <end position="48"/>
    </location>
</feature>